<gene>
    <name evidence="1" type="primary">ligA</name>
    <name type="ordered locus">Cj0586</name>
</gene>
<comment type="function">
    <text evidence="1">DNA ligase that catalyzes the formation of phosphodiester linkages between 5'-phosphoryl and 3'-hydroxyl groups in double-stranded DNA using NAD as a coenzyme and as the energy source for the reaction. It is essential for DNA replication and repair of damaged DNA.</text>
</comment>
<comment type="catalytic activity">
    <reaction evidence="1">
        <text>NAD(+) + (deoxyribonucleotide)n-3'-hydroxyl + 5'-phospho-(deoxyribonucleotide)m = (deoxyribonucleotide)n+m + AMP + beta-nicotinamide D-nucleotide.</text>
        <dbReference type="EC" id="6.5.1.2"/>
    </reaction>
</comment>
<comment type="cofactor">
    <cofactor evidence="1">
        <name>Mg(2+)</name>
        <dbReference type="ChEBI" id="CHEBI:18420"/>
    </cofactor>
    <cofactor evidence="1">
        <name>Mn(2+)</name>
        <dbReference type="ChEBI" id="CHEBI:29035"/>
    </cofactor>
</comment>
<comment type="similarity">
    <text evidence="1">Belongs to the NAD-dependent DNA ligase family. LigA subfamily.</text>
</comment>
<accession>Q0PAT1</accession>
<sequence>MKKEEYLEKVALANLWMRAYYEKDEPLASDEEYDALIRELRVFEEQNKDEISKDSPTQKIAPTIQSEFKKIAHLKRMWSMEDVFDESELRAWAKRAKCEKNFFIEPKFDGASLNLLYENGKLVSGATRGDGEVGEDITLNVFEIENIPKNIAYKERIEIRGEVVILKDDFEKINEKRALLNQSLFANPRNAASGSLRQLDTSITKERNLKFYPWGVGENTLNFTKHSEVMQFIRELGFLKDDFVRLCANLDEVLKAYDELLALREKKPMMMDGMVVRVDDLALCEELGYTVKFPKFMAAFKFPALEKTTRLIGVNLQVGRSGVITPVAVLEPVNLDGVVVKSATLHNFDEIARLDVKINDFVSVIRSGDVIPKITKVFKERREGLEMEISRPKLCPTCQSELLDEGTLIKCQNIDCEDRLVNSIIHFVSKKCLNIDGLGENIVELLYKHKKITTLESIFHLKFNDFEGLEGFKEKKINNLLNAIEQARECELFRFITALGIEHIGEVAAKKLSLSFGKEWYKQSFEAYANLEGFGEQMALSLCEFTRVNRTRIDEFYKLLNLKIEKLEIKSDGVIFGKTFVITGTLSRPRDEFKALIEKLGGKVSGSVSKKTDYVLFGEEAGSKLSKAKELEVKCIDESAFNELVKE</sequence>
<feature type="chain" id="PRO_0000313176" description="DNA ligase">
    <location>
        <begin position="1"/>
        <end position="647"/>
    </location>
</feature>
<feature type="domain" description="BRCT" evidence="1">
    <location>
        <begin position="570"/>
        <end position="647"/>
    </location>
</feature>
<feature type="active site" description="N6-AMP-lysine intermediate" evidence="1">
    <location>
        <position position="107"/>
    </location>
</feature>
<feature type="binding site" evidence="1">
    <location>
        <begin position="30"/>
        <end position="34"/>
    </location>
    <ligand>
        <name>NAD(+)</name>
        <dbReference type="ChEBI" id="CHEBI:57540"/>
    </ligand>
</feature>
<feature type="binding site" evidence="1">
    <location>
        <begin position="79"/>
        <end position="80"/>
    </location>
    <ligand>
        <name>NAD(+)</name>
        <dbReference type="ChEBI" id="CHEBI:57540"/>
    </ligand>
</feature>
<feature type="binding site" evidence="1">
    <location>
        <position position="105"/>
    </location>
    <ligand>
        <name>NAD(+)</name>
        <dbReference type="ChEBI" id="CHEBI:57540"/>
    </ligand>
</feature>
<feature type="binding site" evidence="1">
    <location>
        <position position="128"/>
    </location>
    <ligand>
        <name>NAD(+)</name>
        <dbReference type="ChEBI" id="CHEBI:57540"/>
    </ligand>
</feature>
<feature type="binding site" evidence="1">
    <location>
        <position position="162"/>
    </location>
    <ligand>
        <name>NAD(+)</name>
        <dbReference type="ChEBI" id="CHEBI:57540"/>
    </ligand>
</feature>
<feature type="binding site" evidence="1">
    <location>
        <position position="301"/>
    </location>
    <ligand>
        <name>NAD(+)</name>
        <dbReference type="ChEBI" id="CHEBI:57540"/>
    </ligand>
</feature>
<feature type="binding site" evidence="1">
    <location>
        <position position="395"/>
    </location>
    <ligand>
        <name>Zn(2+)</name>
        <dbReference type="ChEBI" id="CHEBI:29105"/>
    </ligand>
</feature>
<feature type="binding site" evidence="1">
    <location>
        <position position="398"/>
    </location>
    <ligand>
        <name>Zn(2+)</name>
        <dbReference type="ChEBI" id="CHEBI:29105"/>
    </ligand>
</feature>
<feature type="binding site" evidence="1">
    <location>
        <position position="411"/>
    </location>
    <ligand>
        <name>Zn(2+)</name>
        <dbReference type="ChEBI" id="CHEBI:29105"/>
    </ligand>
</feature>
<feature type="binding site" evidence="1">
    <location>
        <position position="416"/>
    </location>
    <ligand>
        <name>Zn(2+)</name>
        <dbReference type="ChEBI" id="CHEBI:29105"/>
    </ligand>
</feature>
<reference key="1">
    <citation type="journal article" date="2000" name="Nature">
        <title>The genome sequence of the food-borne pathogen Campylobacter jejuni reveals hypervariable sequences.</title>
        <authorList>
            <person name="Parkhill J."/>
            <person name="Wren B.W."/>
            <person name="Mungall K.L."/>
            <person name="Ketley J.M."/>
            <person name="Churcher C.M."/>
            <person name="Basham D."/>
            <person name="Chillingworth T."/>
            <person name="Davies R.M."/>
            <person name="Feltwell T."/>
            <person name="Holroyd S."/>
            <person name="Jagels K."/>
            <person name="Karlyshev A.V."/>
            <person name="Moule S."/>
            <person name="Pallen M.J."/>
            <person name="Penn C.W."/>
            <person name="Quail M.A."/>
            <person name="Rajandream M.A."/>
            <person name="Rutherford K.M."/>
            <person name="van Vliet A.H.M."/>
            <person name="Whitehead S."/>
            <person name="Barrell B.G."/>
        </authorList>
    </citation>
    <scope>NUCLEOTIDE SEQUENCE [LARGE SCALE GENOMIC DNA]</scope>
    <source>
        <strain>ATCC 700819 / NCTC 11168</strain>
    </source>
</reference>
<proteinExistence type="inferred from homology"/>
<name>DNLJ_CAMJE</name>
<evidence type="ECO:0000255" key="1">
    <source>
        <dbReference type="HAMAP-Rule" id="MF_01588"/>
    </source>
</evidence>
<dbReference type="EC" id="6.5.1.2" evidence="1"/>
<dbReference type="EMBL" id="AL111168">
    <property type="protein sequence ID" value="CAL34732.1"/>
    <property type="molecule type" value="Genomic_DNA"/>
</dbReference>
<dbReference type="PIR" id="A81406">
    <property type="entry name" value="A81406"/>
</dbReference>
<dbReference type="RefSeq" id="WP_002852062.1">
    <property type="nucleotide sequence ID" value="NZ_SZUC01000002.1"/>
</dbReference>
<dbReference type="RefSeq" id="YP_002344016.1">
    <property type="nucleotide sequence ID" value="NC_002163.1"/>
</dbReference>
<dbReference type="SMR" id="Q0PAT1"/>
<dbReference type="IntAct" id="Q0PAT1">
    <property type="interactions" value="9"/>
</dbReference>
<dbReference type="STRING" id="192222.Cj0586"/>
<dbReference type="PaxDb" id="192222-Cj0586"/>
<dbReference type="EnsemblBacteria" id="CAL34732">
    <property type="protein sequence ID" value="CAL34732"/>
    <property type="gene ID" value="Cj0586"/>
</dbReference>
<dbReference type="GeneID" id="904909"/>
<dbReference type="KEGG" id="cje:Cj0586"/>
<dbReference type="PATRIC" id="fig|192222.6.peg.578"/>
<dbReference type="eggNOG" id="COG0272">
    <property type="taxonomic scope" value="Bacteria"/>
</dbReference>
<dbReference type="HOGENOM" id="CLU_007764_2_1_7"/>
<dbReference type="OrthoDB" id="9759736at2"/>
<dbReference type="Proteomes" id="UP000000799">
    <property type="component" value="Chromosome"/>
</dbReference>
<dbReference type="GO" id="GO:0005829">
    <property type="term" value="C:cytosol"/>
    <property type="evidence" value="ECO:0007669"/>
    <property type="project" value="TreeGrafter"/>
</dbReference>
<dbReference type="GO" id="GO:0003911">
    <property type="term" value="F:DNA ligase (NAD+) activity"/>
    <property type="evidence" value="ECO:0007669"/>
    <property type="project" value="UniProtKB-UniRule"/>
</dbReference>
<dbReference type="GO" id="GO:0046872">
    <property type="term" value="F:metal ion binding"/>
    <property type="evidence" value="ECO:0007669"/>
    <property type="project" value="UniProtKB-KW"/>
</dbReference>
<dbReference type="GO" id="GO:0006281">
    <property type="term" value="P:DNA repair"/>
    <property type="evidence" value="ECO:0007669"/>
    <property type="project" value="UniProtKB-KW"/>
</dbReference>
<dbReference type="GO" id="GO:0006260">
    <property type="term" value="P:DNA replication"/>
    <property type="evidence" value="ECO:0007669"/>
    <property type="project" value="UniProtKB-KW"/>
</dbReference>
<dbReference type="CDD" id="cd17748">
    <property type="entry name" value="BRCT_DNA_ligase_like"/>
    <property type="match status" value="1"/>
</dbReference>
<dbReference type="CDD" id="cd00114">
    <property type="entry name" value="LIGANc"/>
    <property type="match status" value="1"/>
</dbReference>
<dbReference type="FunFam" id="2.40.50.140:FF:000012">
    <property type="entry name" value="DNA ligase"/>
    <property type="match status" value="1"/>
</dbReference>
<dbReference type="Gene3D" id="1.10.150.20">
    <property type="entry name" value="5' to 3' exonuclease, C-terminal subdomain"/>
    <property type="match status" value="2"/>
</dbReference>
<dbReference type="Gene3D" id="3.40.50.10190">
    <property type="entry name" value="BRCT domain"/>
    <property type="match status" value="1"/>
</dbReference>
<dbReference type="Gene3D" id="3.30.470.30">
    <property type="entry name" value="DNA ligase/mRNA capping enzyme"/>
    <property type="match status" value="1"/>
</dbReference>
<dbReference type="Gene3D" id="1.10.287.610">
    <property type="entry name" value="Helix hairpin bin"/>
    <property type="match status" value="1"/>
</dbReference>
<dbReference type="Gene3D" id="2.40.50.140">
    <property type="entry name" value="Nucleic acid-binding proteins"/>
    <property type="match status" value="1"/>
</dbReference>
<dbReference type="HAMAP" id="MF_01588">
    <property type="entry name" value="DNA_ligase_A"/>
    <property type="match status" value="1"/>
</dbReference>
<dbReference type="InterPro" id="IPR001357">
    <property type="entry name" value="BRCT_dom"/>
</dbReference>
<dbReference type="InterPro" id="IPR036420">
    <property type="entry name" value="BRCT_dom_sf"/>
</dbReference>
<dbReference type="InterPro" id="IPR001679">
    <property type="entry name" value="DNA_ligase"/>
</dbReference>
<dbReference type="InterPro" id="IPR018239">
    <property type="entry name" value="DNA_ligase_AS"/>
</dbReference>
<dbReference type="InterPro" id="IPR033136">
    <property type="entry name" value="DNA_ligase_CS"/>
</dbReference>
<dbReference type="InterPro" id="IPR013839">
    <property type="entry name" value="DNAligase_adenylation"/>
</dbReference>
<dbReference type="InterPro" id="IPR013840">
    <property type="entry name" value="DNAligase_N"/>
</dbReference>
<dbReference type="InterPro" id="IPR012340">
    <property type="entry name" value="NA-bd_OB-fold"/>
</dbReference>
<dbReference type="InterPro" id="IPR004150">
    <property type="entry name" value="NAD_DNA_ligase_OB"/>
</dbReference>
<dbReference type="InterPro" id="IPR010994">
    <property type="entry name" value="RuvA_2-like"/>
</dbReference>
<dbReference type="NCBIfam" id="TIGR00575">
    <property type="entry name" value="dnlj"/>
    <property type="match status" value="1"/>
</dbReference>
<dbReference type="NCBIfam" id="NF005932">
    <property type="entry name" value="PRK07956.1"/>
    <property type="match status" value="1"/>
</dbReference>
<dbReference type="PANTHER" id="PTHR23389">
    <property type="entry name" value="CHROMOSOME TRANSMISSION FIDELITY FACTOR 18"/>
    <property type="match status" value="1"/>
</dbReference>
<dbReference type="PANTHER" id="PTHR23389:SF9">
    <property type="entry name" value="DNA LIGASE"/>
    <property type="match status" value="1"/>
</dbReference>
<dbReference type="Pfam" id="PF00533">
    <property type="entry name" value="BRCT"/>
    <property type="match status" value="1"/>
</dbReference>
<dbReference type="Pfam" id="PF01653">
    <property type="entry name" value="DNA_ligase_aden"/>
    <property type="match status" value="1"/>
</dbReference>
<dbReference type="Pfam" id="PF03120">
    <property type="entry name" value="DNA_ligase_OB"/>
    <property type="match status" value="1"/>
</dbReference>
<dbReference type="PIRSF" id="PIRSF001604">
    <property type="entry name" value="LigA"/>
    <property type="match status" value="1"/>
</dbReference>
<dbReference type="SMART" id="SM00292">
    <property type="entry name" value="BRCT"/>
    <property type="match status" value="1"/>
</dbReference>
<dbReference type="SMART" id="SM00532">
    <property type="entry name" value="LIGANc"/>
    <property type="match status" value="1"/>
</dbReference>
<dbReference type="SUPFAM" id="SSF52113">
    <property type="entry name" value="BRCT domain"/>
    <property type="match status" value="1"/>
</dbReference>
<dbReference type="SUPFAM" id="SSF56091">
    <property type="entry name" value="DNA ligase/mRNA capping enzyme, catalytic domain"/>
    <property type="match status" value="1"/>
</dbReference>
<dbReference type="SUPFAM" id="SSF50249">
    <property type="entry name" value="Nucleic acid-binding proteins"/>
    <property type="match status" value="1"/>
</dbReference>
<dbReference type="SUPFAM" id="SSF47781">
    <property type="entry name" value="RuvA domain 2-like"/>
    <property type="match status" value="1"/>
</dbReference>
<dbReference type="PROSITE" id="PS50172">
    <property type="entry name" value="BRCT"/>
    <property type="match status" value="1"/>
</dbReference>
<dbReference type="PROSITE" id="PS01055">
    <property type="entry name" value="DNA_LIGASE_N1"/>
    <property type="match status" value="1"/>
</dbReference>
<dbReference type="PROSITE" id="PS01056">
    <property type="entry name" value="DNA_LIGASE_N2"/>
    <property type="match status" value="1"/>
</dbReference>
<protein>
    <recommendedName>
        <fullName evidence="1">DNA ligase</fullName>
        <ecNumber evidence="1">6.5.1.2</ecNumber>
    </recommendedName>
    <alternativeName>
        <fullName evidence="1">Polydeoxyribonucleotide synthase [NAD(+)]</fullName>
    </alternativeName>
</protein>
<keyword id="KW-0227">DNA damage</keyword>
<keyword id="KW-0234">DNA repair</keyword>
<keyword id="KW-0235">DNA replication</keyword>
<keyword id="KW-0436">Ligase</keyword>
<keyword id="KW-0460">Magnesium</keyword>
<keyword id="KW-0464">Manganese</keyword>
<keyword id="KW-0479">Metal-binding</keyword>
<keyword id="KW-0520">NAD</keyword>
<keyword id="KW-1185">Reference proteome</keyword>
<keyword id="KW-0862">Zinc</keyword>
<organism>
    <name type="scientific">Campylobacter jejuni subsp. jejuni serotype O:2 (strain ATCC 700819 / NCTC 11168)</name>
    <dbReference type="NCBI Taxonomy" id="192222"/>
    <lineage>
        <taxon>Bacteria</taxon>
        <taxon>Pseudomonadati</taxon>
        <taxon>Campylobacterota</taxon>
        <taxon>Epsilonproteobacteria</taxon>
        <taxon>Campylobacterales</taxon>
        <taxon>Campylobacteraceae</taxon>
        <taxon>Campylobacter</taxon>
    </lineage>
</organism>